<accession>B5REZ6</accession>
<protein>
    <recommendedName>
        <fullName evidence="1">Soluble pyridine nucleotide transhydrogenase</fullName>
        <shortName evidence="1">STH</shortName>
        <ecNumber evidence="1">1.6.1.1</ecNumber>
    </recommendedName>
    <alternativeName>
        <fullName evidence="1">NAD(P)(+) transhydrogenase [B-specific]</fullName>
    </alternativeName>
</protein>
<name>STHA_SALG2</name>
<proteinExistence type="inferred from homology"/>
<sequence>MPHSWDYDAVVIGSGPGGEGAAMGLVKQGARVAVIERYHNVGGGCTHWGTIPSKALRHAVSRIIEFNHNPLYSDHSRLLRSSFADILNHADNVINQQTRMRQGFYERNHCEILQGNAHFIDEHTLALECHDGTVETLTAEKFVIACGSRPYHPNDVDFSHPRIYDSDSILSLHHEPRHVIIYGAGVIGCEYASIFRGMDVKVDLINTRDRLLAFLDQEMSDSLSYHFWNSGVVIRHNEEYEKIEGCDDGVIMHLKSGKKLKADCLLYANGRTGNTDSLALENIGLETDSRGQLKVNSMYQTALPHVYAVGDVIGYPSLASAAYDQGRIAAQALVKGEATAHLIEDIPTGIYTIPEISSVGKTEQQLTAMKVPYEVGRAQFKHLARAQIVGMNVGTLKILFHRETKEILGIHCFGERAAEIIHIGQAIMEQKGGGNTIEYFVNTTFNYPTMAEAYRVAALNGLNRLF</sequence>
<organism>
    <name type="scientific">Salmonella gallinarum (strain 287/91 / NCTC 13346)</name>
    <dbReference type="NCBI Taxonomy" id="550538"/>
    <lineage>
        <taxon>Bacteria</taxon>
        <taxon>Pseudomonadati</taxon>
        <taxon>Pseudomonadota</taxon>
        <taxon>Gammaproteobacteria</taxon>
        <taxon>Enterobacterales</taxon>
        <taxon>Enterobacteriaceae</taxon>
        <taxon>Salmonella</taxon>
    </lineage>
</organism>
<keyword id="KW-0963">Cytoplasm</keyword>
<keyword id="KW-0274">FAD</keyword>
<keyword id="KW-0285">Flavoprotein</keyword>
<keyword id="KW-0520">NAD</keyword>
<keyword id="KW-0521">NADP</keyword>
<keyword id="KW-0560">Oxidoreductase</keyword>
<reference key="1">
    <citation type="journal article" date="2008" name="Genome Res.">
        <title>Comparative genome analysis of Salmonella enteritidis PT4 and Salmonella gallinarum 287/91 provides insights into evolutionary and host adaptation pathways.</title>
        <authorList>
            <person name="Thomson N.R."/>
            <person name="Clayton D.J."/>
            <person name="Windhorst D."/>
            <person name="Vernikos G."/>
            <person name="Davidson S."/>
            <person name="Churcher C."/>
            <person name="Quail M.A."/>
            <person name="Stevens M."/>
            <person name="Jones M.A."/>
            <person name="Watson M."/>
            <person name="Barron A."/>
            <person name="Layton A."/>
            <person name="Pickard D."/>
            <person name="Kingsley R.A."/>
            <person name="Bignell A."/>
            <person name="Clark L."/>
            <person name="Harris B."/>
            <person name="Ormond D."/>
            <person name="Abdellah Z."/>
            <person name="Brooks K."/>
            <person name="Cherevach I."/>
            <person name="Chillingworth T."/>
            <person name="Woodward J."/>
            <person name="Norberczak H."/>
            <person name="Lord A."/>
            <person name="Arrowsmith C."/>
            <person name="Jagels K."/>
            <person name="Moule S."/>
            <person name="Mungall K."/>
            <person name="Saunders M."/>
            <person name="Whitehead S."/>
            <person name="Chabalgoity J.A."/>
            <person name="Maskell D."/>
            <person name="Humphreys T."/>
            <person name="Roberts M."/>
            <person name="Barrow P.A."/>
            <person name="Dougan G."/>
            <person name="Parkhill J."/>
        </authorList>
    </citation>
    <scope>NUCLEOTIDE SEQUENCE [LARGE SCALE GENOMIC DNA]</scope>
    <source>
        <strain>287/91 / NCTC 13346</strain>
    </source>
</reference>
<gene>
    <name evidence="1" type="primary">sthA</name>
    <name evidence="1" type="synonym">udhA</name>
    <name type="ordered locus">SG3290</name>
</gene>
<comment type="function">
    <text evidence="1">Conversion of NADPH, generated by peripheral catabolic pathways, to NADH, which can enter the respiratory chain for energy generation.</text>
</comment>
<comment type="catalytic activity">
    <reaction evidence="1">
        <text>NAD(+) + NADPH = NADH + NADP(+)</text>
        <dbReference type="Rhea" id="RHEA:11692"/>
        <dbReference type="ChEBI" id="CHEBI:57540"/>
        <dbReference type="ChEBI" id="CHEBI:57783"/>
        <dbReference type="ChEBI" id="CHEBI:57945"/>
        <dbReference type="ChEBI" id="CHEBI:58349"/>
        <dbReference type="EC" id="1.6.1.1"/>
    </reaction>
</comment>
<comment type="cofactor">
    <cofactor evidence="1">
        <name>FAD</name>
        <dbReference type="ChEBI" id="CHEBI:57692"/>
    </cofactor>
    <text evidence="1">Binds 1 FAD per subunit.</text>
</comment>
<comment type="subcellular location">
    <subcellularLocation>
        <location evidence="1">Cytoplasm</location>
    </subcellularLocation>
</comment>
<comment type="similarity">
    <text evidence="1">Belongs to the class-I pyridine nucleotide-disulfide oxidoreductase family.</text>
</comment>
<evidence type="ECO:0000255" key="1">
    <source>
        <dbReference type="HAMAP-Rule" id="MF_00247"/>
    </source>
</evidence>
<feature type="chain" id="PRO_1000100860" description="Soluble pyridine nucleotide transhydrogenase">
    <location>
        <begin position="1"/>
        <end position="466"/>
    </location>
</feature>
<feature type="binding site" evidence="1">
    <location>
        <begin position="36"/>
        <end position="45"/>
    </location>
    <ligand>
        <name>FAD</name>
        <dbReference type="ChEBI" id="CHEBI:57692"/>
    </ligand>
</feature>
<dbReference type="EC" id="1.6.1.1" evidence="1"/>
<dbReference type="EMBL" id="AM933173">
    <property type="protein sequence ID" value="CAR39086.1"/>
    <property type="molecule type" value="Genomic_DNA"/>
</dbReference>
<dbReference type="RefSeq" id="WP_001120786.1">
    <property type="nucleotide sequence ID" value="NC_011274.1"/>
</dbReference>
<dbReference type="SMR" id="B5REZ6"/>
<dbReference type="KEGG" id="seg:SG3290"/>
<dbReference type="HOGENOM" id="CLU_016755_0_0_6"/>
<dbReference type="Proteomes" id="UP000008321">
    <property type="component" value="Chromosome"/>
</dbReference>
<dbReference type="GO" id="GO:0005829">
    <property type="term" value="C:cytosol"/>
    <property type="evidence" value="ECO:0007669"/>
    <property type="project" value="TreeGrafter"/>
</dbReference>
<dbReference type="GO" id="GO:0004148">
    <property type="term" value="F:dihydrolipoyl dehydrogenase (NADH) activity"/>
    <property type="evidence" value="ECO:0007669"/>
    <property type="project" value="TreeGrafter"/>
</dbReference>
<dbReference type="GO" id="GO:0050660">
    <property type="term" value="F:flavin adenine dinucleotide binding"/>
    <property type="evidence" value="ECO:0007669"/>
    <property type="project" value="TreeGrafter"/>
</dbReference>
<dbReference type="GO" id="GO:0003957">
    <property type="term" value="F:NAD(P)+ transhydrogenase (Si-specific) activity"/>
    <property type="evidence" value="ECO:0007669"/>
    <property type="project" value="UniProtKB-UniRule"/>
</dbReference>
<dbReference type="GO" id="GO:0006103">
    <property type="term" value="P:2-oxoglutarate metabolic process"/>
    <property type="evidence" value="ECO:0007669"/>
    <property type="project" value="TreeGrafter"/>
</dbReference>
<dbReference type="GO" id="GO:0006739">
    <property type="term" value="P:NADP metabolic process"/>
    <property type="evidence" value="ECO:0007669"/>
    <property type="project" value="UniProtKB-UniRule"/>
</dbReference>
<dbReference type="FunFam" id="3.30.390.30:FF:000002">
    <property type="entry name" value="Soluble pyridine nucleotide transhydrogenase"/>
    <property type="match status" value="1"/>
</dbReference>
<dbReference type="FunFam" id="3.50.50.60:FF:000008">
    <property type="entry name" value="Soluble pyridine nucleotide transhydrogenase"/>
    <property type="match status" value="1"/>
</dbReference>
<dbReference type="Gene3D" id="3.30.390.30">
    <property type="match status" value="1"/>
</dbReference>
<dbReference type="Gene3D" id="3.50.50.60">
    <property type="entry name" value="FAD/NAD(P)-binding domain"/>
    <property type="match status" value="2"/>
</dbReference>
<dbReference type="HAMAP" id="MF_00247">
    <property type="entry name" value="SthA"/>
    <property type="match status" value="1"/>
</dbReference>
<dbReference type="InterPro" id="IPR050151">
    <property type="entry name" value="Class-I_Pyr_Nuc-Dis_Oxidored"/>
</dbReference>
<dbReference type="InterPro" id="IPR036188">
    <property type="entry name" value="FAD/NAD-bd_sf"/>
</dbReference>
<dbReference type="InterPro" id="IPR023753">
    <property type="entry name" value="FAD/NAD-binding_dom"/>
</dbReference>
<dbReference type="InterPro" id="IPR016156">
    <property type="entry name" value="FAD/NAD-linked_Rdtase_dimer_sf"/>
</dbReference>
<dbReference type="InterPro" id="IPR001100">
    <property type="entry name" value="Pyr_nuc-diS_OxRdtase"/>
</dbReference>
<dbReference type="InterPro" id="IPR004099">
    <property type="entry name" value="Pyr_nucl-diS_OxRdtase_dimer"/>
</dbReference>
<dbReference type="InterPro" id="IPR022962">
    <property type="entry name" value="STH_gammaproteobact"/>
</dbReference>
<dbReference type="NCBIfam" id="NF003585">
    <property type="entry name" value="PRK05249.1"/>
    <property type="match status" value="1"/>
</dbReference>
<dbReference type="PANTHER" id="PTHR22912">
    <property type="entry name" value="DISULFIDE OXIDOREDUCTASE"/>
    <property type="match status" value="1"/>
</dbReference>
<dbReference type="PANTHER" id="PTHR22912:SF93">
    <property type="entry name" value="SOLUBLE PYRIDINE NUCLEOTIDE TRANSHYDROGENASE"/>
    <property type="match status" value="1"/>
</dbReference>
<dbReference type="Pfam" id="PF07992">
    <property type="entry name" value="Pyr_redox_2"/>
    <property type="match status" value="1"/>
</dbReference>
<dbReference type="Pfam" id="PF02852">
    <property type="entry name" value="Pyr_redox_dim"/>
    <property type="match status" value="1"/>
</dbReference>
<dbReference type="PIRSF" id="PIRSF000350">
    <property type="entry name" value="Mercury_reductase_MerA"/>
    <property type="match status" value="1"/>
</dbReference>
<dbReference type="PRINTS" id="PR00368">
    <property type="entry name" value="FADPNR"/>
</dbReference>
<dbReference type="PRINTS" id="PR00411">
    <property type="entry name" value="PNDRDTASEI"/>
</dbReference>
<dbReference type="SUPFAM" id="SSF51905">
    <property type="entry name" value="FAD/NAD(P)-binding domain"/>
    <property type="match status" value="1"/>
</dbReference>
<dbReference type="SUPFAM" id="SSF55424">
    <property type="entry name" value="FAD/NAD-linked reductases, dimerisation (C-terminal) domain"/>
    <property type="match status" value="1"/>
</dbReference>